<protein>
    <recommendedName>
        <fullName evidence="1">Small ribosomal subunit protein uS14A</fullName>
    </recommendedName>
    <alternativeName>
        <fullName evidence="3">30S ribosomal protein S14</fullName>
    </alternativeName>
</protein>
<organism>
    <name type="scientific">Rhodococcus jostii (strain RHA1)</name>
    <dbReference type="NCBI Taxonomy" id="101510"/>
    <lineage>
        <taxon>Bacteria</taxon>
        <taxon>Bacillati</taxon>
        <taxon>Actinomycetota</taxon>
        <taxon>Actinomycetes</taxon>
        <taxon>Mycobacteriales</taxon>
        <taxon>Nocardiaceae</taxon>
        <taxon>Rhodococcus</taxon>
    </lineage>
</organism>
<keyword id="KW-0687">Ribonucleoprotein</keyword>
<keyword id="KW-0689">Ribosomal protein</keyword>
<keyword id="KW-0694">RNA-binding</keyword>
<keyword id="KW-0699">rRNA-binding</keyword>
<sequence>MAKKSKIAKNEQRKIVVARWAERRTELKETIRRPSSSEDERAEARAALQRLPRDASPVRLRNRDAADGRPRGHLRKFGLSRVRVREMAHRGELPGVHKSSW</sequence>
<dbReference type="EMBL" id="CP000431">
    <property type="protein sequence ID" value="ABG97395.1"/>
    <property type="molecule type" value="Genomic_DNA"/>
</dbReference>
<dbReference type="RefSeq" id="WP_009478876.1">
    <property type="nucleotide sequence ID" value="NC_008268.1"/>
</dbReference>
<dbReference type="SMR" id="Q0S4Z1"/>
<dbReference type="KEGG" id="rha:RHA1_ro05615"/>
<dbReference type="eggNOG" id="COG0199">
    <property type="taxonomic scope" value="Bacteria"/>
</dbReference>
<dbReference type="HOGENOM" id="CLU_139869_0_1_11"/>
<dbReference type="OrthoDB" id="9810484at2"/>
<dbReference type="Proteomes" id="UP000008710">
    <property type="component" value="Chromosome"/>
</dbReference>
<dbReference type="GO" id="GO:0015935">
    <property type="term" value="C:small ribosomal subunit"/>
    <property type="evidence" value="ECO:0007669"/>
    <property type="project" value="TreeGrafter"/>
</dbReference>
<dbReference type="GO" id="GO:0019843">
    <property type="term" value="F:rRNA binding"/>
    <property type="evidence" value="ECO:0007669"/>
    <property type="project" value="UniProtKB-UniRule"/>
</dbReference>
<dbReference type="GO" id="GO:0003735">
    <property type="term" value="F:structural constituent of ribosome"/>
    <property type="evidence" value="ECO:0007669"/>
    <property type="project" value="InterPro"/>
</dbReference>
<dbReference type="GO" id="GO:0006412">
    <property type="term" value="P:translation"/>
    <property type="evidence" value="ECO:0007669"/>
    <property type="project" value="UniProtKB-UniRule"/>
</dbReference>
<dbReference type="FunFam" id="1.10.287.1480:FF:000001">
    <property type="entry name" value="30S ribosomal protein S14"/>
    <property type="match status" value="1"/>
</dbReference>
<dbReference type="Gene3D" id="1.10.287.1480">
    <property type="match status" value="1"/>
</dbReference>
<dbReference type="HAMAP" id="MF_00537">
    <property type="entry name" value="Ribosomal_uS14_1"/>
    <property type="match status" value="1"/>
</dbReference>
<dbReference type="InterPro" id="IPR001209">
    <property type="entry name" value="Ribosomal_uS14"/>
</dbReference>
<dbReference type="InterPro" id="IPR023036">
    <property type="entry name" value="Ribosomal_uS14_bac/plastid"/>
</dbReference>
<dbReference type="NCBIfam" id="NF006477">
    <property type="entry name" value="PRK08881.1"/>
    <property type="match status" value="1"/>
</dbReference>
<dbReference type="PANTHER" id="PTHR19836">
    <property type="entry name" value="30S RIBOSOMAL PROTEIN S14"/>
    <property type="match status" value="1"/>
</dbReference>
<dbReference type="PANTHER" id="PTHR19836:SF23">
    <property type="entry name" value="SMALL RIBOSOMAL SUBUNIT PROTEIN US14A"/>
    <property type="match status" value="1"/>
</dbReference>
<dbReference type="Pfam" id="PF00253">
    <property type="entry name" value="Ribosomal_S14"/>
    <property type="match status" value="1"/>
</dbReference>
<dbReference type="SUPFAM" id="SSF57716">
    <property type="entry name" value="Glucocorticoid receptor-like (DNA-binding domain)"/>
    <property type="match status" value="1"/>
</dbReference>
<feature type="chain" id="PRO_0000269058" description="Small ribosomal subunit protein uS14A">
    <location>
        <begin position="1"/>
        <end position="101"/>
    </location>
</feature>
<feature type="region of interest" description="Disordered" evidence="2">
    <location>
        <begin position="28"/>
        <end position="74"/>
    </location>
</feature>
<feature type="compositionally biased region" description="Basic and acidic residues" evidence="2">
    <location>
        <begin position="28"/>
        <end position="44"/>
    </location>
</feature>
<feature type="compositionally biased region" description="Basic and acidic residues" evidence="2">
    <location>
        <begin position="61"/>
        <end position="70"/>
    </location>
</feature>
<name>RS14_RHOJR</name>
<reference key="1">
    <citation type="journal article" date="2006" name="Proc. Natl. Acad. Sci. U.S.A.">
        <title>The complete genome of Rhodococcus sp. RHA1 provides insights into a catabolic powerhouse.</title>
        <authorList>
            <person name="McLeod M.P."/>
            <person name="Warren R.L."/>
            <person name="Hsiao W.W.L."/>
            <person name="Araki N."/>
            <person name="Myhre M."/>
            <person name="Fernandes C."/>
            <person name="Miyazawa D."/>
            <person name="Wong W."/>
            <person name="Lillquist A.L."/>
            <person name="Wang D."/>
            <person name="Dosanjh M."/>
            <person name="Hara H."/>
            <person name="Petrescu A."/>
            <person name="Morin R.D."/>
            <person name="Yang G."/>
            <person name="Stott J.M."/>
            <person name="Schein J.E."/>
            <person name="Shin H."/>
            <person name="Smailus D."/>
            <person name="Siddiqui A.S."/>
            <person name="Marra M.A."/>
            <person name="Jones S.J.M."/>
            <person name="Holt R."/>
            <person name="Brinkman F.S.L."/>
            <person name="Miyauchi K."/>
            <person name="Fukuda M."/>
            <person name="Davies J.E."/>
            <person name="Mohn W.W."/>
            <person name="Eltis L.D."/>
        </authorList>
    </citation>
    <scope>NUCLEOTIDE SEQUENCE [LARGE SCALE GENOMIC DNA]</scope>
    <source>
        <strain>RHA1</strain>
    </source>
</reference>
<evidence type="ECO:0000255" key="1">
    <source>
        <dbReference type="HAMAP-Rule" id="MF_00537"/>
    </source>
</evidence>
<evidence type="ECO:0000256" key="2">
    <source>
        <dbReference type="SAM" id="MobiDB-lite"/>
    </source>
</evidence>
<evidence type="ECO:0000305" key="3"/>
<proteinExistence type="inferred from homology"/>
<gene>
    <name evidence="1" type="primary">rpsN</name>
    <name type="synonym">rpsN1</name>
    <name type="ordered locus">RHA1_ro05615</name>
</gene>
<comment type="function">
    <text evidence="1">Binds 16S rRNA, required for the assembly of 30S particles and may also be responsible for determining the conformation of the 16S rRNA at the A site.</text>
</comment>
<comment type="subunit">
    <text evidence="1">Part of the 30S ribosomal subunit. Contacts proteins S3 and S10.</text>
</comment>
<comment type="similarity">
    <text evidence="1">Belongs to the universal ribosomal protein uS14 family.</text>
</comment>
<accession>Q0S4Z1</accession>